<name>SCX7_ANDCR</name>
<accession>M1JB54</accession>
<dbReference type="EMBL" id="JQ975129">
    <property type="protein sequence ID" value="AGE83106.1"/>
    <property type="molecule type" value="mRNA"/>
</dbReference>
<dbReference type="SMR" id="M1JB54"/>
<dbReference type="GO" id="GO:0005576">
    <property type="term" value="C:extracellular region"/>
    <property type="evidence" value="ECO:0007669"/>
    <property type="project" value="UniProtKB-SubCell"/>
</dbReference>
<dbReference type="GO" id="GO:0019871">
    <property type="term" value="F:sodium channel inhibitor activity"/>
    <property type="evidence" value="ECO:0007669"/>
    <property type="project" value="InterPro"/>
</dbReference>
<dbReference type="GO" id="GO:0090729">
    <property type="term" value="F:toxin activity"/>
    <property type="evidence" value="ECO:0007669"/>
    <property type="project" value="UniProtKB-KW"/>
</dbReference>
<dbReference type="GO" id="GO:0006952">
    <property type="term" value="P:defense response"/>
    <property type="evidence" value="ECO:0007669"/>
    <property type="project" value="InterPro"/>
</dbReference>
<dbReference type="CDD" id="cd23106">
    <property type="entry name" value="neurotoxins_LC_scorpion"/>
    <property type="match status" value="1"/>
</dbReference>
<dbReference type="Gene3D" id="3.30.30.10">
    <property type="entry name" value="Knottin, scorpion toxin-like"/>
    <property type="match status" value="1"/>
</dbReference>
<dbReference type="InterPro" id="IPR044062">
    <property type="entry name" value="LCN-type_CS_alpha_beta_dom"/>
</dbReference>
<dbReference type="InterPro" id="IPR003614">
    <property type="entry name" value="Scorpion_toxin-like"/>
</dbReference>
<dbReference type="InterPro" id="IPR036574">
    <property type="entry name" value="Scorpion_toxin-like_sf"/>
</dbReference>
<dbReference type="InterPro" id="IPR018218">
    <property type="entry name" value="Scorpion_toxinL"/>
</dbReference>
<dbReference type="InterPro" id="IPR002061">
    <property type="entry name" value="Scorpion_toxinL/defensin"/>
</dbReference>
<dbReference type="Pfam" id="PF00537">
    <property type="entry name" value="Toxin_3"/>
    <property type="match status" value="1"/>
</dbReference>
<dbReference type="PRINTS" id="PR00285">
    <property type="entry name" value="SCORPNTOXIN"/>
</dbReference>
<dbReference type="SMART" id="SM00505">
    <property type="entry name" value="Knot1"/>
    <property type="match status" value="1"/>
</dbReference>
<dbReference type="SUPFAM" id="SSF57095">
    <property type="entry name" value="Scorpion toxin-like"/>
    <property type="match status" value="1"/>
</dbReference>
<dbReference type="PROSITE" id="PS51863">
    <property type="entry name" value="LCN_CSAB"/>
    <property type="match status" value="1"/>
</dbReference>
<proteinExistence type="inferred from homology"/>
<feature type="chain" id="PRO_5001113086" description="Putative sodium channel alpha-toxin Acra7">
    <location>
        <begin position="1"/>
        <end position="66"/>
    </location>
</feature>
<feature type="propeptide" id="PRO_0000432479" description="Removed by a carboxypeptidase" evidence="2">
    <location>
        <position position="67"/>
    </location>
</feature>
<feature type="domain" description="LCN-type CS-alpha/beta" evidence="3">
    <location>
        <begin position="2"/>
        <end position="66"/>
    </location>
</feature>
<feature type="disulfide bond" evidence="3">
    <location>
        <begin position="12"/>
        <end position="65"/>
    </location>
</feature>
<feature type="disulfide bond" evidence="3">
    <location>
        <begin position="16"/>
        <end position="37"/>
    </location>
</feature>
<feature type="disulfide bond" evidence="3">
    <location>
        <begin position="23"/>
        <end position="47"/>
    </location>
</feature>
<feature type="disulfide bond" evidence="3">
    <location>
        <begin position="27"/>
        <end position="49"/>
    </location>
</feature>
<reference key="1">
    <citation type="journal article" date="2013" name="Biochimie">
        <title>Molecular cloning and biochemical characterization of the first Na(+)-channel alpha-type toxin peptide (Acra4) from Androctonus crassicauda scorpion venom.</title>
        <authorList>
            <person name="Caliskan F."/>
            <person name="Quintero-Hernandez V."/>
            <person name="Restano-Cassulini R."/>
            <person name="Coronas-Valderrama F.I."/>
            <person name="Corzo G."/>
            <person name="Possani L.D."/>
        </authorList>
    </citation>
    <scope>NUCLEOTIDE SEQUENCE [MRNA]</scope>
    <source>
        <tissue>Venom gland</tissue>
    </source>
</reference>
<evidence type="ECO:0000250" key="1"/>
<evidence type="ECO:0000250" key="2">
    <source>
        <dbReference type="UniProtKB" id="P01480"/>
    </source>
</evidence>
<evidence type="ECO:0000255" key="3">
    <source>
        <dbReference type="PROSITE-ProRule" id="PRU01210"/>
    </source>
</evidence>
<evidence type="ECO:0000305" key="4"/>
<organism>
    <name type="scientific">Androctonus crassicauda</name>
    <name type="common">Arabian fat-tailed scorpion</name>
    <dbReference type="NCBI Taxonomy" id="122909"/>
    <lineage>
        <taxon>Eukaryota</taxon>
        <taxon>Metazoa</taxon>
        <taxon>Ecdysozoa</taxon>
        <taxon>Arthropoda</taxon>
        <taxon>Chelicerata</taxon>
        <taxon>Arachnida</taxon>
        <taxon>Scorpiones</taxon>
        <taxon>Buthida</taxon>
        <taxon>Buthoidea</taxon>
        <taxon>Buthidae</taxon>
        <taxon>Androctonus</taxon>
    </lineage>
</organism>
<comment type="function">
    <text evidence="1">Alpha toxins bind voltage-independently at site-3 of sodium channels (Nav) and inhibit the inactivation of the activated channels, thereby blocking neuronal transmission.</text>
</comment>
<comment type="subcellular location">
    <subcellularLocation>
        <location evidence="1">Secreted</location>
    </subcellularLocation>
</comment>
<comment type="tissue specificity">
    <text evidence="4">Expressed by the venom gland.</text>
</comment>
<comment type="domain">
    <text evidence="4">Has the structural arrangement of an alpha-helix connected to antiparallel beta-sheets by disulfide bonds (CS-alpha/beta).</text>
</comment>
<comment type="similarity">
    <text evidence="4">Belongs to the long (4 C-C) scorpion toxin superfamily. Sodium channel inhibitor family. Alpha subfamily.</text>
</comment>
<keyword id="KW-1015">Disulfide bond</keyword>
<keyword id="KW-0872">Ion channel impairing toxin</keyword>
<keyword id="KW-0528">Neurotoxin</keyword>
<keyword id="KW-0964">Secreted</keyword>
<keyword id="KW-0800">Toxin</keyword>
<keyword id="KW-0738">Voltage-gated sodium channel impairing toxin</keyword>
<protein>
    <recommendedName>
        <fullName>Putative sodium channel alpha-toxin Acra7</fullName>
    </recommendedName>
</protein>
<sequence length="67" mass="7314">VRDGYIVKPTNCVIHCIPFSPGCDKDCKEKGAASGYCQAFGKHGNGCWCIDLPDKVPIKDPNQDCTR</sequence>